<keyword id="KW-0002">3D-structure</keyword>
<keyword id="KW-0025">Alternative splicing</keyword>
<keyword id="KW-0067">ATP-binding</keyword>
<keyword id="KW-1003">Cell membrane</keyword>
<keyword id="KW-0325">Glycoprotein</keyword>
<keyword id="KW-0445">Lipid transport</keyword>
<keyword id="KW-0472">Membrane</keyword>
<keyword id="KW-0547">Nucleotide-binding</keyword>
<keyword id="KW-0597">Phosphoprotein</keyword>
<keyword id="KW-1267">Proteomics identification</keyword>
<keyword id="KW-1185">Reference proteome</keyword>
<keyword id="KW-0677">Repeat</keyword>
<keyword id="KW-1278">Translocase</keyword>
<keyword id="KW-0812">Transmembrane</keyword>
<keyword id="KW-1133">Transmembrane helix</keyword>
<keyword id="KW-0813">Transport</keyword>
<feature type="chain" id="PRO_0000093360" description="ATP-binding cassette sub-family C member 3">
    <location>
        <begin position="1"/>
        <end position="1527"/>
    </location>
</feature>
<feature type="topological domain" description="Extracellular" evidence="1">
    <location>
        <begin position="1"/>
        <end position="32"/>
    </location>
</feature>
<feature type="transmembrane region" description="Helical; Name=1" evidence="5">
    <location>
        <begin position="33"/>
        <end position="53"/>
    </location>
</feature>
<feature type="topological domain" description="Cytoplasmic" evidence="1">
    <location>
        <begin position="54"/>
        <end position="73"/>
    </location>
</feature>
<feature type="transmembrane region" description="Helical; Name=2" evidence="5">
    <location>
        <begin position="74"/>
        <end position="94"/>
    </location>
</feature>
<feature type="topological domain" description="Extracellular" evidence="1">
    <location>
        <begin position="95"/>
        <end position="99"/>
    </location>
</feature>
<feature type="transmembrane region" description="Helical; Name=3" evidence="5">
    <location>
        <begin position="100"/>
        <end position="120"/>
    </location>
</feature>
<feature type="topological domain" description="Cytoplasmic" evidence="1">
    <location>
        <begin position="121"/>
        <end position="132"/>
    </location>
</feature>
<feature type="transmembrane region" description="Helical; Name=4" evidence="5">
    <location>
        <begin position="133"/>
        <end position="153"/>
    </location>
</feature>
<feature type="topological domain" description="Extracellular" evidence="1">
    <location>
        <begin position="154"/>
        <end position="171"/>
    </location>
</feature>
<feature type="transmembrane region" description="Helical; Name=5" evidence="5">
    <location>
        <begin position="172"/>
        <end position="192"/>
    </location>
</feature>
<feature type="topological domain" description="Cytoplasmic" evidence="1">
    <location>
        <begin position="193"/>
        <end position="302"/>
    </location>
</feature>
<feature type="transmembrane region" description="Helical; Name=6" evidence="5">
    <location>
        <begin position="303"/>
        <end position="323"/>
    </location>
</feature>
<feature type="topological domain" description="Extracellular" evidence="1">
    <location>
        <begin position="324"/>
        <end position="349"/>
    </location>
</feature>
<feature type="transmembrane region" description="Helical; Name=7" evidence="5">
    <location>
        <begin position="350"/>
        <end position="370"/>
    </location>
</feature>
<feature type="topological domain" description="Cytoplasmic" evidence="1">
    <location>
        <begin position="371"/>
        <end position="426"/>
    </location>
</feature>
<feature type="transmembrane region" description="Helical; Name=8" evidence="5">
    <location>
        <begin position="427"/>
        <end position="447"/>
    </location>
</feature>
<feature type="topological domain" description="Extracellular" evidence="1">
    <location>
        <begin position="448"/>
        <end position="450"/>
    </location>
</feature>
<feature type="transmembrane region" description="Helical; Name=9" evidence="5">
    <location>
        <begin position="451"/>
        <end position="471"/>
    </location>
</feature>
<feature type="topological domain" description="Cytoplasmic" evidence="1">
    <location>
        <begin position="472"/>
        <end position="533"/>
    </location>
</feature>
<feature type="transmembrane region" description="Helical; Name=10" evidence="5">
    <location>
        <begin position="534"/>
        <end position="554"/>
    </location>
</feature>
<feature type="topological domain" description="Extracellular" evidence="1">
    <location>
        <begin position="555"/>
        <end position="576"/>
    </location>
</feature>
<feature type="transmembrane region" description="Helical; Name=11" evidence="5">
    <location>
        <begin position="577"/>
        <end position="597"/>
    </location>
</feature>
<feature type="topological domain" description="Cytoplasmic" evidence="1">
    <location>
        <begin position="598"/>
        <end position="963"/>
    </location>
</feature>
<feature type="transmembrane region" description="Helical; Name=12" evidence="5">
    <location>
        <begin position="964"/>
        <end position="984"/>
    </location>
</feature>
<feature type="topological domain" description="Extracellular" evidence="1">
    <location>
        <begin position="985"/>
        <end position="1021"/>
    </location>
</feature>
<feature type="transmembrane region" description="Helical; Name=13" evidence="5">
    <location>
        <begin position="1022"/>
        <end position="1042"/>
    </location>
</feature>
<feature type="topological domain" description="Cytoplasmic" evidence="1">
    <location>
        <begin position="1043"/>
        <end position="1085"/>
    </location>
</feature>
<feature type="transmembrane region" description="Helical; Name=14" evidence="5">
    <location>
        <begin position="1086"/>
        <end position="1106"/>
    </location>
</feature>
<feature type="topological domain" description="Extracellular" evidence="1">
    <location>
        <position position="1107"/>
    </location>
</feature>
<feature type="transmembrane region" description="Helical; Name=15" evidence="5">
    <location>
        <begin position="1108"/>
        <end position="1128"/>
    </location>
</feature>
<feature type="topological domain" description="Cytoplasmic" evidence="1">
    <location>
        <begin position="1129"/>
        <end position="1199"/>
    </location>
</feature>
<feature type="transmembrane region" description="Helical; Name=16" evidence="5">
    <location>
        <begin position="1200"/>
        <end position="1220"/>
    </location>
</feature>
<feature type="topological domain" description="Extracellular" evidence="1">
    <location>
        <begin position="1221"/>
        <end position="1222"/>
    </location>
</feature>
<feature type="transmembrane region" description="Helical; Name=17" evidence="5">
    <location>
        <begin position="1223"/>
        <end position="1243"/>
    </location>
</feature>
<feature type="topological domain" description="Cytoplasmic" evidence="1">
    <location>
        <begin position="1244"/>
        <end position="1527"/>
    </location>
</feature>
<feature type="domain" description="ABC transmembrane type-1 1" evidence="5">
    <location>
        <begin position="311"/>
        <end position="594"/>
    </location>
</feature>
<feature type="domain" description="ABC transporter 1" evidence="4">
    <location>
        <begin position="629"/>
        <end position="851"/>
    </location>
</feature>
<feature type="domain" description="ABC transmembrane type-1 2" evidence="5">
    <location>
        <begin position="971"/>
        <end position="1252"/>
    </location>
</feature>
<feature type="domain" description="ABC transporter 2" evidence="4">
    <location>
        <begin position="1291"/>
        <end position="1523"/>
    </location>
</feature>
<feature type="region of interest" description="Disordered" evidence="6">
    <location>
        <begin position="910"/>
        <end position="932"/>
    </location>
</feature>
<feature type="binding site" evidence="4">
    <location>
        <begin position="661"/>
        <end position="668"/>
    </location>
    <ligand>
        <name>ATP</name>
        <dbReference type="ChEBI" id="CHEBI:30616"/>
        <label>1</label>
    </ligand>
</feature>
<feature type="binding site" evidence="4">
    <location>
        <begin position="1323"/>
        <end position="1330"/>
    </location>
    <ligand>
        <name>ATP</name>
        <dbReference type="ChEBI" id="CHEBI:30616"/>
        <label>2</label>
    </ligand>
</feature>
<feature type="modified residue" description="Phosphoserine" evidence="25 26">
    <location>
        <position position="908"/>
    </location>
</feature>
<feature type="modified residue" description="Phosphoserine" evidence="25">
    <location>
        <position position="911"/>
    </location>
</feature>
<feature type="glycosylation site" description="N-linked (GlcNAc...) asparagine" evidence="3">
    <location>
        <position position="18"/>
    </location>
</feature>
<feature type="glycosylation site" description="N-linked (GlcNAc...) asparagine" evidence="3">
    <location>
        <position position="1006"/>
    </location>
</feature>
<feature type="glycosylation site" description="N-linked (GlcNAc...) asparagine" evidence="3">
    <location>
        <position position="1007"/>
    </location>
</feature>
<feature type="splice variant" id="VSP_043864" description="In isoform 4." evidence="19">
    <original>M</original>
    <variation>MPACTVKESPNCKRNFCKADHIVNTSGGSNLERVGKQKTIQKGQFSQRSVCT</variation>
    <location>
        <position position="1"/>
    </location>
</feature>
<feature type="splice variant" id="VSP_000040" description="In isoform 3." evidence="18">
    <original>MAIYGYRHPLEEKDLWSLKEEDRSQMVVQQLLEAWRKQEKQTARHKASAAPGKNASGEDEVLLGARPRPRKPSFLKALLATFGSSFLISACFKLIQDLLSFINPQLLSILIRFISNPMAPSWWGFLVAGLMFLCSMMQSLILQHYYHYIFVTGVKFRTGIMGVIYRKALVITNSVKRASTVGEIVNLMSVDAQRFMDLAPFLNLLWSAPLQIILAIYFLWQNLGPSVLAGVAFMVLLIPLNGAVAVKMRAFQVKQMKLKDSRIKLMSEILNGIKVLKLYAWEPSF</original>
    <variation>LLNPDPLRGCLPGFTSPQDGHLWLPASPGGEGPLVPKGRGQIPDGGAAAAGGMEEAGKADGTTQGFSSTWEKCLRRGRGAAGCPAQAPEALLPEGPAGHLRLQLPHQCLLQAYPGPALLHQSTAAQHPDQVYLQPHGPLLVGLPGGWADVPVLHDAVADLTTLLPLHLCDWGEVSYWDHGCHLQEGSGYHQLSQTCVHCGGNCQPHVSGCPALHGPCPLPQSAVVSTPADHPGDLLPLAEPRSLCPGWSRFHGLADSTQRSCGREDARLPGKANEIEGLAHQADE</variation>
    <location>
        <begin position="226"/>
        <end position="510"/>
    </location>
</feature>
<feature type="splice variant" id="VSP_000041" description="In isoform 3." evidence="18">
    <location>
        <begin position="511"/>
        <end position="1527"/>
    </location>
</feature>
<feature type="splice variant" id="VSP_039041" description="In isoform 5." evidence="15">
    <original>TLITLWVYVYVDPNNVLDAEKAFVSV</original>
    <variation>RLGTGLGPCLQGSGCPGMARAHWTLP</variation>
    <location>
        <begin position="547"/>
        <end position="572"/>
    </location>
</feature>
<feature type="splice variant" id="VSP_039042" description="In isoform 5." evidence="15">
    <location>
        <begin position="573"/>
        <end position="1527"/>
    </location>
</feature>
<feature type="splice variant" id="VSP_000042" description="In isoform 2." evidence="18">
    <original>WLSIGVEFVGNCVVLFAALFAVIGRSSLNPGLVGLSVSYSLQVTFALNWMIRMMSDLESNIVAVERVKEYSKTETEAPWVVEGSRPPEGWPPRGEVEFRNYSVRYRPGLDLVLRDLSLHVHGGEKVGIVGRTGAGKSSMTLCLFRILEAAKGEIRIDGLNVADIGLHDLRSQLTIIPQDPILFSGTLRMNLDPFGSYSEEDIWWALELSHLHTFVSSQPAGLDFQCSEGGENLSVGQRQLVCLARALLRKSRILVLDEATAAIDLETDNLIQATIRTQFDTCTVLTIAHRLNTIMDYTRVLVLDKGVVAEFDSPANLIAARGIFYGMARDAGLA</original>
    <variation>SEAASLAPCSSRNSQQALWCSGSLSLLSPKQKTGPALPLPHFLLI</variation>
    <location>
        <begin position="1194"/>
        <end position="1527"/>
    </location>
</feature>
<feature type="sequence variant" id="VAR_029119" description="In dbSNP:rs11568609.">
    <original>G</original>
    <variation>D</variation>
    <location>
        <position position="11"/>
    </location>
</feature>
<feature type="sequence variant" id="VAR_020235" description="In dbSNP:rs11568605.">
    <original>S</original>
    <variation>F</variation>
    <location>
        <position position="346"/>
    </location>
</feature>
<feature type="sequence variant" id="VAR_084161" description="In dbSNP:rs144520783." evidence="10">
    <original>L</original>
    <variation>Q</variation>
    <location>
        <position position="548"/>
    </location>
</feature>
<feature type="sequence variant" id="VAR_029120" description="In dbSNP:rs11568593.">
    <original>R</original>
    <variation>G</variation>
    <location>
        <position position="1286"/>
    </location>
</feature>
<feature type="sequence variant" id="VAR_020237" description="Does not affect subcellular localizattion; does not affect the transport of monoglucuronosyl bilirubin, bisglucuronosyl bilirubin, leukotriene C4, dehydroepiandrosterone-3-sulfate and 17-beta-glucuronosyl oestradiol; dbSNP:rs11568591." evidence="10">
    <original>R</original>
    <variation>H</variation>
    <location>
        <position position="1297"/>
    </location>
</feature>
<feature type="sequence variant" id="VAR_020239" description="In dbSNP:rs11568590.">
    <original>Q</original>
    <variation>R</variation>
    <location>
        <position position="1365"/>
    </location>
</feature>
<feature type="sequence variant" id="VAR_020240" description="In dbSNP:rs45461799.">
    <original>R</original>
    <variation>S</variation>
    <location>
        <position position="1381"/>
    </location>
</feature>
<feature type="sequence conflict" description="In Ref. 10; AAH46126." evidence="20" ref="10">
    <original>K</original>
    <variation>N</variation>
    <location>
        <position position="13"/>
    </location>
</feature>
<feature type="sequence conflict" description="In Ref. 5; CAA76658." evidence="20" ref="5">
    <original>C</original>
    <variation>R</variation>
    <location>
        <position position="42"/>
    </location>
</feature>
<feature type="sequence conflict" description="In Ref. 4; AAD02846." evidence="20" ref="4">
    <original>A</original>
    <variation>T</variation>
    <location>
        <position position="184"/>
    </location>
</feature>
<feature type="sequence conflict" description="In Ref. 1; AAC34668." evidence="20" ref="1">
    <original>A</original>
    <variation>G</variation>
    <location>
        <position position="344"/>
    </location>
</feature>
<feature type="sequence conflict" description="In Ref. 2; BAA28146." evidence="20" ref="2">
    <original>F</original>
    <variation>Y</variation>
    <location>
        <position position="569"/>
    </location>
</feature>
<feature type="sequence conflict" description="In Ref. 11; AAB71756." evidence="20" ref="11">
    <original>F</original>
    <variation>C</variation>
    <location>
        <position position="1128"/>
    </location>
</feature>
<feature type="sequence conflict" description="In Ref. 11; AAB71756." evidence="20" ref="11">
    <original>L</original>
    <variation>I</variation>
    <location>
        <position position="1212"/>
    </location>
</feature>
<feature type="sequence conflict" description="In Ref. 11; AAB71756." evidence="20" ref="11">
    <original>D</original>
    <variation>E</variation>
    <location>
        <position position="1249"/>
    </location>
</feature>
<feature type="sequence conflict" description="In Ref. 11; AAB71756." evidence="20" ref="11">
    <original>L</original>
    <variation>F</variation>
    <location>
        <position position="1359"/>
    </location>
</feature>
<feature type="sequence conflict" description="In Ref. 1; AAC34668 and 11; AAB71756." evidence="20" ref="1 11">
    <original>L</original>
    <variation>V</variation>
    <location>
        <position position="1362"/>
    </location>
</feature>
<feature type="sequence conflict" description="In Ref. 11; AAB71756." evidence="20" ref="11">
    <original>S</original>
    <variation>C</variation>
    <location>
        <position position="1364"/>
    </location>
</feature>
<feature type="sequence conflict" description="In Ref. 11; AAB71756." evidence="20" ref="11">
    <original>L</original>
    <variation>M</variation>
    <location>
        <position position="1366"/>
    </location>
</feature>
<feature type="sequence conflict" description="In Ref. 11; AAB71756." evidence="20" ref="11">
    <original>Q</original>
    <variation>R</variation>
    <location>
        <position position="1371"/>
    </location>
</feature>
<feature type="helix" evidence="27">
    <location>
        <begin position="35"/>
        <end position="48"/>
    </location>
</feature>
<feature type="helix" evidence="27">
    <location>
        <begin position="50"/>
        <end position="53"/>
    </location>
</feature>
<feature type="helix" evidence="27">
    <location>
        <begin position="55"/>
        <end position="57"/>
    </location>
</feature>
<feature type="helix" evidence="27">
    <location>
        <begin position="68"/>
        <end position="71"/>
    </location>
</feature>
<feature type="helix" evidence="27">
    <location>
        <begin position="75"/>
        <end position="92"/>
    </location>
</feature>
<feature type="turn" evidence="27">
    <location>
        <begin position="93"/>
        <end position="97"/>
    </location>
</feature>
<feature type="helix" evidence="27">
    <location>
        <begin position="103"/>
        <end position="105"/>
    </location>
</feature>
<feature type="helix" evidence="27">
    <location>
        <begin position="108"/>
        <end position="110"/>
    </location>
</feature>
<feature type="turn" evidence="27">
    <location>
        <begin position="111"/>
        <end position="114"/>
    </location>
</feature>
<feature type="helix" evidence="27">
    <location>
        <begin position="115"/>
        <end position="127"/>
    </location>
</feature>
<feature type="turn" evidence="27">
    <location>
        <begin position="128"/>
        <end position="130"/>
    </location>
</feature>
<feature type="helix" evidence="27">
    <location>
        <begin position="136"/>
        <end position="152"/>
    </location>
</feature>
<feature type="turn" evidence="27">
    <location>
        <begin position="153"/>
        <end position="155"/>
    </location>
</feature>
<feature type="helix" evidence="27">
    <location>
        <begin position="156"/>
        <end position="158"/>
    </location>
</feature>
<feature type="turn" evidence="27">
    <location>
        <begin position="159"/>
        <end position="162"/>
    </location>
</feature>
<feature type="helix" evidence="27">
    <location>
        <begin position="168"/>
        <end position="173"/>
    </location>
</feature>
<feature type="helix" evidence="27">
    <location>
        <begin position="176"/>
        <end position="188"/>
    </location>
</feature>
<feature type="turn" evidence="27">
    <location>
        <begin position="208"/>
        <end position="211"/>
    </location>
</feature>
<feature type="helix" evidence="27">
    <location>
        <begin position="215"/>
        <end position="218"/>
    </location>
</feature>
<feature type="helix" evidence="27">
    <location>
        <begin position="224"/>
        <end position="232"/>
    </location>
</feature>
<feature type="turn" evidence="27">
    <location>
        <begin position="237"/>
        <end position="239"/>
    </location>
</feature>
<feature type="helix" evidence="27">
    <location>
        <begin position="245"/>
        <end position="247"/>
    </location>
</feature>
<feature type="turn" evidence="27">
    <location>
        <begin position="249"/>
        <end position="252"/>
    </location>
</feature>
<feature type="helix" evidence="27">
    <location>
        <begin position="253"/>
        <end position="264"/>
    </location>
</feature>
<feature type="helix" evidence="27">
    <location>
        <begin position="300"/>
        <end position="307"/>
    </location>
</feature>
<feature type="turn" evidence="27">
    <location>
        <begin position="308"/>
        <end position="310"/>
    </location>
</feature>
<feature type="strand" evidence="27">
    <location>
        <begin position="311"/>
        <end position="313"/>
    </location>
</feature>
<feature type="helix" evidence="27">
    <location>
        <begin position="314"/>
        <end position="322"/>
    </location>
</feature>
<feature type="turn" evidence="27">
    <location>
        <begin position="323"/>
        <end position="325"/>
    </location>
</feature>
<feature type="helix" evidence="27">
    <location>
        <begin position="327"/>
        <end position="339"/>
    </location>
</feature>
<feature type="strand" evidence="27">
    <location>
        <begin position="342"/>
        <end position="344"/>
    </location>
</feature>
<feature type="helix" evidence="27">
    <location>
        <begin position="346"/>
        <end position="358"/>
    </location>
</feature>
<feature type="turn" evidence="27">
    <location>
        <begin position="359"/>
        <end position="365"/>
    </location>
</feature>
<feature type="helix" evidence="27">
    <location>
        <begin position="367"/>
        <end position="374"/>
    </location>
</feature>
<feature type="turn" evidence="27">
    <location>
        <begin position="375"/>
        <end position="383"/>
    </location>
</feature>
<feature type="turn" evidence="27">
    <location>
        <begin position="386"/>
        <end position="389"/>
    </location>
</feature>
<feature type="helix" evidence="27">
    <location>
        <begin position="390"/>
        <end position="393"/>
    </location>
</feature>
<feature type="helix" evidence="27">
    <location>
        <begin position="398"/>
        <end position="402"/>
    </location>
</feature>
<feature type="helix" evidence="27">
    <location>
        <begin position="411"/>
        <end position="414"/>
    </location>
</feature>
<feature type="turn" evidence="27">
    <location>
        <begin position="415"/>
        <end position="418"/>
    </location>
</feature>
<feature type="turn" evidence="27">
    <location>
        <begin position="420"/>
        <end position="422"/>
    </location>
</feature>
<feature type="helix" evidence="27">
    <location>
        <begin position="423"/>
        <end position="426"/>
    </location>
</feature>
<feature type="turn" evidence="27">
    <location>
        <begin position="429"/>
        <end position="431"/>
    </location>
</feature>
<feature type="helix" evidence="27">
    <location>
        <begin position="432"/>
        <end position="448"/>
    </location>
</feature>
<feature type="helix" evidence="27">
    <location>
        <begin position="449"/>
        <end position="452"/>
    </location>
</feature>
<feature type="helix" evidence="27">
    <location>
        <begin position="453"/>
        <end position="461"/>
    </location>
</feature>
<feature type="helix" evidence="27">
    <location>
        <begin position="464"/>
        <end position="466"/>
    </location>
</feature>
<feature type="turn" evidence="27">
    <location>
        <begin position="467"/>
        <end position="469"/>
    </location>
</feature>
<feature type="strand" evidence="27">
    <location>
        <begin position="470"/>
        <end position="472"/>
    </location>
</feature>
<feature type="helix" evidence="27">
    <location>
        <begin position="475"/>
        <end position="496"/>
    </location>
</feature>
<feature type="helix" evidence="27">
    <location>
        <begin position="499"/>
        <end position="503"/>
    </location>
</feature>
<feature type="helix" evidence="27">
    <location>
        <begin position="507"/>
        <end position="525"/>
    </location>
</feature>
<feature type="turn" evidence="27">
    <location>
        <begin position="526"/>
        <end position="528"/>
    </location>
</feature>
<feature type="strand" evidence="27">
    <location>
        <begin position="529"/>
        <end position="532"/>
    </location>
</feature>
<feature type="turn" evidence="27">
    <location>
        <begin position="533"/>
        <end position="535"/>
    </location>
</feature>
<feature type="helix" evidence="27">
    <location>
        <begin position="537"/>
        <end position="540"/>
    </location>
</feature>
<feature type="helix" evidence="27">
    <location>
        <begin position="542"/>
        <end position="556"/>
    </location>
</feature>
<feature type="helix" evidence="27">
    <location>
        <begin position="565"/>
        <end position="582"/>
    </location>
</feature>
<feature type="helix" evidence="27">
    <location>
        <begin position="585"/>
        <end position="594"/>
    </location>
</feature>
<feature type="helix" evidence="27">
    <location>
        <begin position="597"/>
        <end position="606"/>
    </location>
</feature>
<feature type="strand" evidence="27">
    <location>
        <begin position="616"/>
        <end position="619"/>
    </location>
</feature>
<feature type="strand" evidence="27">
    <location>
        <begin position="625"/>
        <end position="637"/>
    </location>
</feature>
<feature type="strand" evidence="27">
    <location>
        <begin position="643"/>
        <end position="652"/>
    </location>
</feature>
<feature type="strand" evidence="27">
    <location>
        <begin position="656"/>
        <end position="660"/>
    </location>
</feature>
<feature type="helix" evidence="27">
    <location>
        <begin position="667"/>
        <end position="675"/>
    </location>
</feature>
<feature type="strand" evidence="27">
    <location>
        <begin position="678"/>
        <end position="682"/>
    </location>
</feature>
<feature type="strand" evidence="27">
    <location>
        <begin position="685"/>
        <end position="687"/>
    </location>
</feature>
<feature type="strand" evidence="27">
    <location>
        <begin position="691"/>
        <end position="694"/>
    </location>
</feature>
<feature type="strand" evidence="27">
    <location>
        <begin position="702"/>
        <end position="704"/>
    </location>
</feature>
<feature type="helix" evidence="27">
    <location>
        <begin position="705"/>
        <end position="710"/>
    </location>
</feature>
<feature type="strand" evidence="27">
    <location>
        <begin position="711"/>
        <end position="713"/>
    </location>
</feature>
<feature type="helix" evidence="27">
    <location>
        <begin position="717"/>
        <end position="726"/>
    </location>
</feature>
<feature type="helix" evidence="27">
    <location>
        <begin position="732"/>
        <end position="735"/>
    </location>
</feature>
<feature type="turn" evidence="27">
    <location>
        <begin position="737"/>
        <end position="740"/>
    </location>
</feature>
<feature type="strand" evidence="27">
    <location>
        <begin position="741"/>
        <end position="749"/>
    </location>
</feature>
<feature type="helix" evidence="27">
    <location>
        <begin position="753"/>
        <end position="767"/>
    </location>
</feature>
<feature type="strand" evidence="27">
    <location>
        <begin position="770"/>
        <end position="775"/>
    </location>
</feature>
<feature type="turn" evidence="27">
    <location>
        <begin position="777"/>
        <end position="780"/>
    </location>
</feature>
<feature type="helix" evidence="27">
    <location>
        <begin position="783"/>
        <end position="792"/>
    </location>
</feature>
<feature type="strand" evidence="27">
    <location>
        <begin position="801"/>
        <end position="808"/>
    </location>
</feature>
<feature type="strand" evidence="27">
    <location>
        <begin position="819"/>
        <end position="825"/>
    </location>
</feature>
<feature type="strand" evidence="27">
    <location>
        <begin position="828"/>
        <end position="833"/>
    </location>
</feature>
<feature type="helix" evidence="27">
    <location>
        <begin position="835"/>
        <end position="840"/>
    </location>
</feature>
<feature type="helix" evidence="27">
    <location>
        <begin position="844"/>
        <end position="848"/>
    </location>
</feature>
<feature type="helix" evidence="27">
    <location>
        <begin position="956"/>
        <end position="966"/>
    </location>
</feature>
<feature type="turn" evidence="27">
    <location>
        <begin position="968"/>
        <end position="970"/>
    </location>
</feature>
<feature type="helix" evidence="27">
    <location>
        <begin position="972"/>
        <end position="975"/>
    </location>
</feature>
<feature type="helix" evidence="27">
    <location>
        <begin position="978"/>
        <end position="995"/>
    </location>
</feature>
<feature type="helix" evidence="27">
    <location>
        <begin position="1008"/>
        <end position="1019"/>
    </location>
</feature>
<feature type="turn" evidence="27">
    <location>
        <begin position="1021"/>
        <end position="1026"/>
    </location>
</feature>
<feature type="helix" evidence="27">
    <location>
        <begin position="1027"/>
        <end position="1052"/>
    </location>
</feature>
<feature type="helix" evidence="27">
    <location>
        <begin position="1057"/>
        <end position="1062"/>
    </location>
</feature>
<feature type="helix" evidence="27">
    <location>
        <begin position="1065"/>
        <end position="1071"/>
    </location>
</feature>
<feature type="helix" evidence="27">
    <location>
        <begin position="1074"/>
        <end position="1081"/>
    </location>
</feature>
<feature type="helix" evidence="27">
    <location>
        <begin position="1083"/>
        <end position="1094"/>
    </location>
</feature>
<feature type="turn" evidence="27">
    <location>
        <begin position="1095"/>
        <end position="1098"/>
    </location>
</feature>
<feature type="helix" evidence="27">
    <location>
        <begin position="1099"/>
        <end position="1107"/>
    </location>
</feature>
<feature type="helix" evidence="27">
    <location>
        <begin position="1109"/>
        <end position="1114"/>
    </location>
</feature>
<feature type="helix" evidence="27">
    <location>
        <begin position="1117"/>
        <end position="1152"/>
    </location>
</feature>
<feature type="turn" evidence="27">
    <location>
        <begin position="1153"/>
        <end position="1157"/>
    </location>
</feature>
<feature type="helix" evidence="27">
    <location>
        <begin position="1158"/>
        <end position="1163"/>
    </location>
</feature>
<feature type="helix" evidence="27">
    <location>
        <begin position="1167"/>
        <end position="1185"/>
    </location>
</feature>
<feature type="helix" evidence="27">
    <location>
        <begin position="1193"/>
        <end position="1199"/>
    </location>
</feature>
<feature type="helix" evidence="27">
    <location>
        <begin position="1202"/>
        <end position="1216"/>
    </location>
</feature>
<feature type="turn" evidence="27">
    <location>
        <begin position="1217"/>
        <end position="1220"/>
    </location>
</feature>
<feature type="helix" evidence="27">
    <location>
        <begin position="1225"/>
        <end position="1231"/>
    </location>
</feature>
<feature type="helix" evidence="27">
    <location>
        <begin position="1234"/>
        <end position="1236"/>
    </location>
</feature>
<feature type="helix" evidence="27">
    <location>
        <begin position="1238"/>
        <end position="1253"/>
    </location>
</feature>
<feature type="helix" evidence="27">
    <location>
        <begin position="1255"/>
        <end position="1263"/>
    </location>
</feature>
<feature type="strand" evidence="27">
    <location>
        <begin position="1275"/>
        <end position="1277"/>
    </location>
</feature>
<feature type="strand" evidence="27">
    <location>
        <begin position="1289"/>
        <end position="1296"/>
    </location>
</feature>
<feature type="strand" evidence="27">
    <location>
        <begin position="1305"/>
        <end position="1313"/>
    </location>
</feature>
<feature type="strand" evidence="27">
    <location>
        <begin position="1318"/>
        <end position="1322"/>
    </location>
</feature>
<feature type="helix" evidence="27">
    <location>
        <begin position="1329"/>
        <end position="1333"/>
    </location>
</feature>
<feature type="turn" evidence="27">
    <location>
        <begin position="1334"/>
        <end position="1338"/>
    </location>
</feature>
<feature type="strand" evidence="27">
    <location>
        <begin position="1344"/>
        <end position="1351"/>
    </location>
</feature>
<feature type="helix" evidence="27">
    <location>
        <begin position="1354"/>
        <end position="1356"/>
    </location>
</feature>
<feature type="helix" evidence="27">
    <location>
        <begin position="1359"/>
        <end position="1362"/>
    </location>
</feature>
<feature type="helix" evidence="27">
    <location>
        <begin position="1363"/>
        <end position="1365"/>
    </location>
</feature>
<feature type="strand" evidence="27">
    <location>
        <begin position="1366"/>
        <end position="1369"/>
    </location>
</feature>
<feature type="strand" evidence="27">
    <location>
        <begin position="1377"/>
        <end position="1379"/>
    </location>
</feature>
<feature type="turn" evidence="27">
    <location>
        <begin position="1380"/>
        <end position="1384"/>
    </location>
</feature>
<feature type="helix" evidence="27">
    <location>
        <begin position="1392"/>
        <end position="1401"/>
    </location>
</feature>
<feature type="helix" evidence="27">
    <location>
        <begin position="1405"/>
        <end position="1410"/>
    </location>
</feature>
<feature type="strand" evidence="27">
    <location>
        <begin position="1411"/>
        <end position="1413"/>
    </location>
</feature>
<feature type="helix" evidence="27">
    <location>
        <begin position="1414"/>
        <end position="1416"/>
    </location>
</feature>
<feature type="strand" evidence="27">
    <location>
        <begin position="1423"/>
        <end position="1426"/>
    </location>
</feature>
<feature type="helix" evidence="27">
    <location>
        <begin position="1428"/>
        <end position="1442"/>
    </location>
</feature>
<feature type="strand" evidence="27">
    <location>
        <begin position="1445"/>
        <end position="1450"/>
    </location>
</feature>
<feature type="strand" evidence="27">
    <location>
        <begin position="1454"/>
        <end position="1456"/>
    </location>
</feature>
<feature type="helix" evidence="27">
    <location>
        <begin position="1458"/>
        <end position="1471"/>
    </location>
</feature>
<feature type="turn" evidence="27">
    <location>
        <begin position="1472"/>
        <end position="1474"/>
    </location>
</feature>
<feature type="strand" evidence="27">
    <location>
        <begin position="1475"/>
        <end position="1480"/>
    </location>
</feature>
<feature type="helix" evidence="27">
    <location>
        <begin position="1484"/>
        <end position="1487"/>
    </location>
</feature>
<feature type="strand" evidence="27">
    <location>
        <begin position="1490"/>
        <end position="1497"/>
    </location>
</feature>
<feature type="strand" evidence="27">
    <location>
        <begin position="1500"/>
        <end position="1505"/>
    </location>
</feature>
<feature type="helix" evidence="27">
    <location>
        <begin position="1507"/>
        <end position="1512"/>
    </location>
</feature>
<feature type="helix" evidence="27">
    <location>
        <begin position="1516"/>
        <end position="1522"/>
    </location>
</feature>
<organism>
    <name type="scientific">Homo sapiens</name>
    <name type="common">Human</name>
    <dbReference type="NCBI Taxonomy" id="9606"/>
    <lineage>
        <taxon>Eukaryota</taxon>
        <taxon>Metazoa</taxon>
        <taxon>Chordata</taxon>
        <taxon>Craniata</taxon>
        <taxon>Vertebrata</taxon>
        <taxon>Euteleostomi</taxon>
        <taxon>Mammalia</taxon>
        <taxon>Eutheria</taxon>
        <taxon>Euarchontoglires</taxon>
        <taxon>Primates</taxon>
        <taxon>Haplorrhini</taxon>
        <taxon>Catarrhini</taxon>
        <taxon>Hominidae</taxon>
        <taxon>Homo</taxon>
    </lineage>
</organism>
<accession>O15438</accession>
<accession>B2RPA9</accession>
<accession>D3DTX9</accession>
<accession>O60265</accession>
<accession>O60922</accession>
<accession>O75621</accession>
<accession>O95078</accession>
<accession>O95289</accession>
<accession>O95290</accession>
<accession>Q86X85</accession>
<accession>Q9UN52</accession>
<protein>
    <recommendedName>
        <fullName>ATP-binding cassette sub-family C member 3</fullName>
        <ecNumber evidence="9 10">7.6.2.-</ecNumber>
        <ecNumber evidence="8 9 14">7.6.2.2</ecNumber>
        <ecNumber evidence="9 10 14">7.6.2.3</ecNumber>
    </recommendedName>
    <alternativeName>
        <fullName evidence="16">Canalicular multispecific organic anion transporter 2</fullName>
    </alternativeName>
    <alternativeName>
        <fullName evidence="17">Multi-specific organic anion transporter D</fullName>
        <shortName evidence="17">MOAT-D</shortName>
    </alternativeName>
    <alternativeName>
        <fullName>Multidrug resistance-associated protein 3</fullName>
    </alternativeName>
</protein>
<comment type="function">
    <text evidence="2 8 9 10 23">ATP-dependent transporter of the ATP-binding cassette (ABC) family that binds and hydrolyzes ATP to enable active transport of various substrates including many drugs, toxicants and endogenous compound across cell membranes (PubMed:10359813, PubMed:11581266, PubMed:15083066). Transports glucuronide conjugates such as bilirubin diglucuronide, estradiol-17-beta-o-glucuronide and GSH conjugates such as leukotriene C4 (LTC4) (PubMed:11581266, PubMed:15083066). Transports also various bile salts (taurocholate, glycocholate, taurochenodeoxycholate-3-sulfate, taurolithocholate- 3-sulfate) (By similarity). Does not contribute substantially to bile salt physiology but provides an alternative route for the export of bile acids and glucuronides from cholestatic hepatocytes (By similarity). May contribute to regulate the transport of organic compounds in testes across the blood-testis-barrier (Probable). Can confer resistance to various anticancer drugs, methotrexate, tenoposide and etoposide, by decreasing accumulation of these drugs in cells (PubMed:10359813, PubMed:11581266).</text>
</comment>
<comment type="catalytic activity">
    <reaction evidence="2">
        <text>taurocholate(in) + ATP + H2O = taurocholate(out) + ADP + phosphate + H(+)</text>
        <dbReference type="Rhea" id="RHEA:50052"/>
        <dbReference type="ChEBI" id="CHEBI:15377"/>
        <dbReference type="ChEBI" id="CHEBI:15378"/>
        <dbReference type="ChEBI" id="CHEBI:30616"/>
        <dbReference type="ChEBI" id="CHEBI:36257"/>
        <dbReference type="ChEBI" id="CHEBI:43474"/>
        <dbReference type="ChEBI" id="CHEBI:456216"/>
    </reaction>
    <physiologicalReaction direction="left-to-right" evidence="2">
        <dbReference type="Rhea" id="RHEA:50053"/>
    </physiologicalReaction>
</comment>
<comment type="catalytic activity">
    <reaction evidence="2">
        <text>glycocholate(in) + ATP + H2O = glycocholate(out) + ADP + phosphate + H(+)</text>
        <dbReference type="Rhea" id="RHEA:50056"/>
        <dbReference type="ChEBI" id="CHEBI:15377"/>
        <dbReference type="ChEBI" id="CHEBI:15378"/>
        <dbReference type="ChEBI" id="CHEBI:29746"/>
        <dbReference type="ChEBI" id="CHEBI:30616"/>
        <dbReference type="ChEBI" id="CHEBI:43474"/>
        <dbReference type="ChEBI" id="CHEBI:456216"/>
    </reaction>
    <physiologicalReaction direction="left-to-right" evidence="2">
        <dbReference type="Rhea" id="RHEA:50057"/>
    </physiologicalReaction>
</comment>
<comment type="catalytic activity">
    <reaction evidence="2">
        <text>taurolithocholate 3-sulfate(in) + ATP + H2O = taurolithocholate 3-sulfate(out) + ADP + phosphate + H(+)</text>
        <dbReference type="Rhea" id="RHEA:50084"/>
        <dbReference type="ChEBI" id="CHEBI:15377"/>
        <dbReference type="ChEBI" id="CHEBI:15378"/>
        <dbReference type="ChEBI" id="CHEBI:30616"/>
        <dbReference type="ChEBI" id="CHEBI:43474"/>
        <dbReference type="ChEBI" id="CHEBI:58301"/>
        <dbReference type="ChEBI" id="CHEBI:456216"/>
    </reaction>
</comment>
<comment type="catalytic activity">
    <reaction evidence="2">
        <text>taurochenodeoxycholate 3-sulfate(in) + ATP + H2O = taurochenodeoxycholate 3-sulfate(out) + ADP + phosphate + H(+)</text>
        <dbReference type="Rhea" id="RHEA:66176"/>
        <dbReference type="ChEBI" id="CHEBI:15377"/>
        <dbReference type="ChEBI" id="CHEBI:15378"/>
        <dbReference type="ChEBI" id="CHEBI:30616"/>
        <dbReference type="ChEBI" id="CHEBI:43474"/>
        <dbReference type="ChEBI" id="CHEBI:166912"/>
        <dbReference type="ChEBI" id="CHEBI:456216"/>
    </reaction>
    <physiologicalReaction direction="left-to-right" evidence="2">
        <dbReference type="Rhea" id="RHEA:66177"/>
    </physiologicalReaction>
</comment>
<comment type="catalytic activity">
    <reaction evidence="9 10 14">
        <text>an S-substituted glutathione(in) + ATP + H2O = an S-substituted glutathione(out) + ADP + phosphate + H(+)</text>
        <dbReference type="Rhea" id="RHEA:19121"/>
        <dbReference type="ChEBI" id="CHEBI:15377"/>
        <dbReference type="ChEBI" id="CHEBI:15378"/>
        <dbReference type="ChEBI" id="CHEBI:30616"/>
        <dbReference type="ChEBI" id="CHEBI:43474"/>
        <dbReference type="ChEBI" id="CHEBI:90779"/>
        <dbReference type="ChEBI" id="CHEBI:456216"/>
        <dbReference type="EC" id="7.6.2.3"/>
    </reaction>
    <physiologicalReaction direction="left-to-right" evidence="21 22">
        <dbReference type="Rhea" id="RHEA:19122"/>
    </physiologicalReaction>
</comment>
<comment type="catalytic activity">
    <reaction evidence="8 9 14">
        <text>ATP + H2O + xenobioticSide 1 = ADP + phosphate + xenobioticSide 2.</text>
        <dbReference type="EC" id="7.6.2.2"/>
    </reaction>
</comment>
<comment type="catalytic activity">
    <reaction evidence="9 10">
        <text>17beta-estradiol 17-O-(beta-D-glucuronate)(in) + ATP + H2O = 17beta-estradiol 17-O-(beta-D-glucuronate)(out) + ADP + phosphate + H(+)</text>
        <dbReference type="Rhea" id="RHEA:60128"/>
        <dbReference type="ChEBI" id="CHEBI:15377"/>
        <dbReference type="ChEBI" id="CHEBI:15378"/>
        <dbReference type="ChEBI" id="CHEBI:30616"/>
        <dbReference type="ChEBI" id="CHEBI:43474"/>
        <dbReference type="ChEBI" id="CHEBI:82961"/>
        <dbReference type="ChEBI" id="CHEBI:456216"/>
    </reaction>
    <physiologicalReaction direction="left-to-right" evidence="22">
        <dbReference type="Rhea" id="RHEA:60129"/>
    </physiologicalReaction>
</comment>
<comment type="catalytic activity">
    <reaction evidence="10">
        <text>dehydroepiandrosterone 3-sulfate(in) + ATP + H2O = dehydroepiandrosterone 3-sulfate(out) + ADP + phosphate + H(+)</text>
        <dbReference type="Rhea" id="RHEA:61364"/>
        <dbReference type="ChEBI" id="CHEBI:15377"/>
        <dbReference type="ChEBI" id="CHEBI:15378"/>
        <dbReference type="ChEBI" id="CHEBI:30616"/>
        <dbReference type="ChEBI" id="CHEBI:43474"/>
        <dbReference type="ChEBI" id="CHEBI:57905"/>
        <dbReference type="ChEBI" id="CHEBI:456216"/>
    </reaction>
    <physiologicalReaction direction="left-to-right" evidence="22">
        <dbReference type="Rhea" id="RHEA:61365"/>
    </physiologicalReaction>
</comment>
<comment type="catalytic activity">
    <reaction evidence="9 10">
        <text>leukotriene C4(in) + ATP + H2O = leukotriene C4(out) + ADP + phosphate + H(+)</text>
        <dbReference type="Rhea" id="RHEA:38963"/>
        <dbReference type="ChEBI" id="CHEBI:15377"/>
        <dbReference type="ChEBI" id="CHEBI:15378"/>
        <dbReference type="ChEBI" id="CHEBI:30616"/>
        <dbReference type="ChEBI" id="CHEBI:43474"/>
        <dbReference type="ChEBI" id="CHEBI:57973"/>
        <dbReference type="ChEBI" id="CHEBI:456216"/>
    </reaction>
    <physiologicalReaction direction="left-to-right" evidence="22">
        <dbReference type="Rhea" id="RHEA:38964"/>
    </physiologicalReaction>
</comment>
<comment type="catalytic activity">
    <reaction evidence="10">
        <text>(4Z,15Z)-bilirubin IXalpha C8-beta-D-glucuronoside(in) + ATP + H2O = (4Z,15Z)-bilirubin IXalpha C8-beta-D-glucuronoside(out) + ADP + phosphate + H(+)</text>
        <dbReference type="Rhea" id="RHEA:66180"/>
        <dbReference type="ChEBI" id="CHEBI:15377"/>
        <dbReference type="ChEBI" id="CHEBI:15378"/>
        <dbReference type="ChEBI" id="CHEBI:30616"/>
        <dbReference type="ChEBI" id="CHEBI:43474"/>
        <dbReference type="ChEBI" id="CHEBI:229704"/>
        <dbReference type="ChEBI" id="CHEBI:456216"/>
    </reaction>
    <physiologicalReaction direction="left-to-right" evidence="22">
        <dbReference type="Rhea" id="RHEA:66181"/>
    </physiologicalReaction>
</comment>
<comment type="catalytic activity">
    <reaction evidence="10">
        <text>(4Z,15Z)-bilirubin IXalpha C8,C12-beta-D-bisglucuronoside(in) + ATP + H2O = (4Z,15Z)-bilirubin IXalpha C8,C12-beta-D-bisglucuronoside(out) + ADP + phosphate + H(+)</text>
        <dbReference type="Rhea" id="RHEA:66192"/>
        <dbReference type="ChEBI" id="CHEBI:15377"/>
        <dbReference type="ChEBI" id="CHEBI:15378"/>
        <dbReference type="ChEBI" id="CHEBI:30616"/>
        <dbReference type="ChEBI" id="CHEBI:43474"/>
        <dbReference type="ChEBI" id="CHEBI:229706"/>
        <dbReference type="ChEBI" id="CHEBI:456216"/>
    </reaction>
    <physiologicalReaction direction="left-to-right" evidence="22">
        <dbReference type="Rhea" id="RHEA:66193"/>
    </physiologicalReaction>
</comment>
<comment type="biophysicochemical properties">
    <kinetics>
        <KM evidence="9">17.7 uM for oestradiol-17-(beta-D-glucuronide)</KM>
        <KM evidence="10">24.2 uM for oestradiol-17-(beta-D-glucuronide)</KM>
        <KM evidence="10">46.3 uM for dehydroepiandrosterone- 3-sulfate</KM>
        <Vmax evidence="10">281.0 pmol/min/mg enzyme for dehydroepiandrosterone- 3-sulfate transport</Vmax>
        <Vmax evidence="9">474.0 pmol/min/mg enzyme for oestradiol-17-(beta-D-glucuronide) transport</Vmax>
        <Vmax evidence="10">71.5 pmol/min/mg enzyme for oestradiol-17-(beta-D-glucuronide) transport</Vmax>
    </kinetics>
</comment>
<comment type="subcellular location">
    <subcellularLocation>
        <location evidence="7 8 10 11">Basolateral cell membrane</location>
        <topology evidence="3">Multi-pass membrane protein</topology>
    </subcellularLocation>
    <subcellularLocation>
        <location evidence="12">Basal cell membrane</location>
        <topology evidence="3">Multi-pass membrane protein</topology>
    </subcellularLocation>
    <text evidence="11 12">Localized to the basolateral membrane of enterocytes (PubMed:28408210). Localized to the basal membrane of Sertoli cells (PubMed:35307651).</text>
</comment>
<comment type="alternative products">
    <event type="alternative splicing"/>
    <isoform>
        <id>O15438-1</id>
        <name>1</name>
        <name>MRP3</name>
        <sequence type="displayed"/>
    </isoform>
    <isoform>
        <id>O15438-2</id>
        <name>2</name>
        <name>MRP3A</name>
        <sequence type="described" ref="VSP_000042"/>
    </isoform>
    <isoform>
        <id>O15438-3</id>
        <name>3</name>
        <name>MRP3B</name>
        <sequence type="described" ref="VSP_000040 VSP_000041"/>
    </isoform>
    <isoform>
        <id>O15438-4</id>
        <name>4</name>
        <name>MRP3S1</name>
        <sequence type="described" ref="VSP_043864"/>
    </isoform>
    <isoform>
        <id>O15438-5</id>
        <name>5</name>
        <sequence type="described" ref="VSP_039041 VSP_039042"/>
    </isoform>
    <text>Additional isoforms seem to exist.</text>
</comment>
<comment type="tissue specificity">
    <text evidence="7 10 11 12 13">Mainly expressed in the liver. Also expressed in small intestine, colon, prostate, testis, brain and at a lower level in the kidney. In testis, localized to peritubular myoid cells, Leydig cells, along the basal membrane of Sertoli cells and moderately in the adluminal compartment of the seminiferous tubules (PubMed:35307651).</text>
</comment>
<comment type="induction">
    <text evidence="7">Strongly up-regulated under conditions of MRP2 deficiency.</text>
</comment>
<comment type="miscellaneous">
    <molecule>Isoform 2</molecule>
    <text evidence="20">May be produced at very low levels due to a premature stop codon in the mRNA, leading to nonsense-mediated mRNA decay.</text>
</comment>
<comment type="miscellaneous">
    <molecule>Isoform 3</molecule>
    <text evidence="20">May be produced at very low levels due to a premature stop codon in the mRNA, leading to nonsense-mediated mRNA decay.</text>
</comment>
<comment type="miscellaneous">
    <molecule>Isoform 4</molecule>
    <text evidence="20">May be produced at very low levels due to a premature stop codon in the mRNA, leading to nonsense-mediated mRNA decay.</text>
</comment>
<comment type="similarity">
    <text evidence="20">Belongs to the ABC transporter superfamily. ABCC family. Conjugate transporter (TC 3.A.1.208) subfamily.</text>
</comment>
<comment type="sequence caution" evidence="20">
    <conflict type="frameshift">
        <sequence resource="EMBL-CDS" id="AAB71756"/>
    </conflict>
</comment>
<comment type="sequence caution" evidence="20">
    <conflict type="frameshift">
        <sequence resource="EMBL-CDS" id="AAD01430"/>
    </conflict>
</comment>
<comment type="sequence caution" evidence="20">
    <conflict type="erroneous translation">
        <sequence resource="EMBL-CDS" id="AAD38185"/>
    </conflict>
    <text>Wrong choice of CDS.</text>
</comment>
<comment type="online information" name="ABCMdb">
    <link uri="http://abcm2.hegelab.org/search"/>
    <text>Database for mutations in ABC proteins</text>
</comment>
<proteinExistence type="evidence at protein level"/>
<reference key="1">
    <citation type="journal article" date="1998" name="Biochem. Biophys. Res. Commun.">
        <title>Isolation of a novel human canalicular multispecific organic anion transporter, cMOAT2/MRP3, and its expression in cisplatin-resistant cancer cells with decreased ATP-dependent drug transport.</title>
        <authorList>
            <person name="Uchiumi T."/>
            <person name="Hinoshita E."/>
            <person name="Haga S."/>
            <person name="Nakamura T."/>
            <person name="Tanaka T."/>
            <person name="Toh S."/>
            <person name="Furukawa M."/>
            <person name="Kawabe T."/>
            <person name="Wada M."/>
            <person name="Kagotani K."/>
            <person name="Okumura K."/>
            <person name="Kohno K."/>
            <person name="Akiyama S."/>
            <person name="Kuwano M."/>
        </authorList>
    </citation>
    <scope>NUCLEOTIDE SEQUENCE [MRNA] (ISOFORM 1)</scope>
    <source>
        <tissue>Liver</tissue>
    </source>
</reference>
<reference key="2">
    <citation type="journal article" date="1998" name="FEBS Lett.">
        <title>cDNA cloning and inducible expression of human multidrug resistance associated protein 3 (MRP3).</title>
        <authorList>
            <person name="Kiuchi Y."/>
            <person name="Suzuki H."/>
            <person name="Hirohashi T."/>
            <person name="Tyson C.A."/>
            <person name="Sugiyama Y."/>
        </authorList>
    </citation>
    <scope>NUCLEOTIDE SEQUENCE [MRNA] (ISOFORM 1)</scope>
    <scope>TISSUE SPECIFICITY</scope>
</reference>
<reference key="3">
    <citation type="journal article" date="1998" name="J. Natl. Cancer Inst.">
        <title>Characterization of MOAT-C and MOAT-D, new members of the MRP/cMOAT subfamily of transporter proteins.</title>
        <authorList>
            <person name="Belinsky M.G."/>
            <person name="Bain L.J."/>
            <person name="Balsara B.B."/>
            <person name="Testa J.R."/>
            <person name="Kruh G.D."/>
        </authorList>
    </citation>
    <scope>NUCLEOTIDE SEQUENCE [MRNA] (ISOFORM 1)</scope>
</reference>
<reference key="4">
    <citation type="journal article" date="1999" name="Biochim. Biophys. Acta">
        <title>Human MRP3 transporter: identification of the 5'-flanking region, genomic organization and alternative splice variants.</title>
        <authorList>
            <person name="Fromm M.F."/>
            <person name="Leake B."/>
            <person name="Roden D.M."/>
            <person name="Wilkinson G.R."/>
            <person name="Kim R.B."/>
        </authorList>
    </citation>
    <scope>NUCLEOTIDE SEQUENCE [MRNA] (ISOFORMS 1; 2 AND 3)</scope>
    <source>
        <tissue>Liver</tissue>
    </source>
</reference>
<reference key="5">
    <citation type="journal article" date="1999" name="Hepatology">
        <title>Characterization of the human multidrug resistance protein isoform MRP3 localized to the basolateral hepatocyte membrane.</title>
        <authorList>
            <person name="Koenig J."/>
            <person name="Rost D."/>
            <person name="Cui Y."/>
            <person name="Keppler D."/>
        </authorList>
    </citation>
    <scope>NUCLEOTIDE SEQUENCE [MRNA] (ISOFORM 1)</scope>
    <scope>SUBCELLULAR LOCATION</scope>
    <scope>TISSUE SPECIFICITY</scope>
    <scope>INDUCTION</scope>
    <source>
        <tissue>Liver</tissue>
    </source>
</reference>
<reference key="6">
    <citation type="journal article" date="1999" name="Proc. Natl. Acad. Sci. U.S.A.">
        <title>MRP3, an organic anion transporter able to transport anti-cancer drugs.</title>
        <authorList>
            <person name="Kool M."/>
            <person name="van der Linden M."/>
            <person name="de Haas M."/>
            <person name="Scheffer G.L."/>
            <person name="de Vree J.M."/>
            <person name="Smith A.J."/>
            <person name="Jansen G."/>
            <person name="Peters G.J."/>
            <person name="Ponne N."/>
            <person name="Scheper R.J."/>
            <person name="Elferink R.P."/>
            <person name="Baas F."/>
            <person name="Borst P."/>
        </authorList>
    </citation>
    <scope>NUCLEOTIDE SEQUENCE [MRNA] (ISOFORM 1)</scope>
    <scope>FUNCTION</scope>
    <scope>CATALYTIC ACTIVITY</scope>
    <scope>SUBCELLULAR LOCATION</scope>
</reference>
<reference key="7">
    <citation type="submission" date="1999-05" db="EMBL/GenBank/DDBJ databases">
        <title>Identification of a novel splice variant of MRP3 involved in resistance to DNA damaging agents.</title>
        <authorList>
            <person name="Auclair D."/>
            <person name="Alonso E."/>
            <person name="Chen L.B."/>
        </authorList>
    </citation>
    <scope>NUCLEOTIDE SEQUENCE [MRNA] (ISOFORM 4)</scope>
    <source>
        <tissue>Colon carcinoma</tissue>
    </source>
</reference>
<reference key="8">
    <citation type="journal article" date="2006" name="Nature">
        <title>DNA sequence of human chromosome 17 and analysis of rearrangement in the human lineage.</title>
        <authorList>
            <person name="Zody M.C."/>
            <person name="Garber M."/>
            <person name="Adams D.J."/>
            <person name="Sharpe T."/>
            <person name="Harrow J."/>
            <person name="Lupski J.R."/>
            <person name="Nicholson C."/>
            <person name="Searle S.M."/>
            <person name="Wilming L."/>
            <person name="Young S.K."/>
            <person name="Abouelleil A."/>
            <person name="Allen N.R."/>
            <person name="Bi W."/>
            <person name="Bloom T."/>
            <person name="Borowsky M.L."/>
            <person name="Bugalter B.E."/>
            <person name="Butler J."/>
            <person name="Chang J.L."/>
            <person name="Chen C.-K."/>
            <person name="Cook A."/>
            <person name="Corum B."/>
            <person name="Cuomo C.A."/>
            <person name="de Jong P.J."/>
            <person name="DeCaprio D."/>
            <person name="Dewar K."/>
            <person name="FitzGerald M."/>
            <person name="Gilbert J."/>
            <person name="Gibson R."/>
            <person name="Gnerre S."/>
            <person name="Goldstein S."/>
            <person name="Grafham D.V."/>
            <person name="Grocock R."/>
            <person name="Hafez N."/>
            <person name="Hagopian D.S."/>
            <person name="Hart E."/>
            <person name="Norman C.H."/>
            <person name="Humphray S."/>
            <person name="Jaffe D.B."/>
            <person name="Jones M."/>
            <person name="Kamal M."/>
            <person name="Khodiyar V.K."/>
            <person name="LaButti K."/>
            <person name="Laird G."/>
            <person name="Lehoczky J."/>
            <person name="Liu X."/>
            <person name="Lokyitsang T."/>
            <person name="Loveland J."/>
            <person name="Lui A."/>
            <person name="Macdonald P."/>
            <person name="Major J.E."/>
            <person name="Matthews L."/>
            <person name="Mauceli E."/>
            <person name="McCarroll S.A."/>
            <person name="Mihalev A.H."/>
            <person name="Mudge J."/>
            <person name="Nguyen C."/>
            <person name="Nicol R."/>
            <person name="O'Leary S.B."/>
            <person name="Osoegawa K."/>
            <person name="Schwartz D.C."/>
            <person name="Shaw-Smith C."/>
            <person name="Stankiewicz P."/>
            <person name="Steward C."/>
            <person name="Swarbreck D."/>
            <person name="Venkataraman V."/>
            <person name="Whittaker C.A."/>
            <person name="Yang X."/>
            <person name="Zimmer A.R."/>
            <person name="Bradley A."/>
            <person name="Hubbard T."/>
            <person name="Birren B.W."/>
            <person name="Rogers J."/>
            <person name="Lander E.S."/>
            <person name="Nusbaum C."/>
        </authorList>
    </citation>
    <scope>NUCLEOTIDE SEQUENCE [LARGE SCALE GENOMIC DNA]</scope>
</reference>
<reference key="9">
    <citation type="submission" date="2005-09" db="EMBL/GenBank/DDBJ databases">
        <authorList>
            <person name="Mural R.J."/>
            <person name="Istrail S."/>
            <person name="Sutton G.G."/>
            <person name="Florea L."/>
            <person name="Halpern A.L."/>
            <person name="Mobarry C.M."/>
            <person name="Lippert R."/>
            <person name="Walenz B."/>
            <person name="Shatkay H."/>
            <person name="Dew I."/>
            <person name="Miller J.R."/>
            <person name="Flanigan M.J."/>
            <person name="Edwards N.J."/>
            <person name="Bolanos R."/>
            <person name="Fasulo D."/>
            <person name="Halldorsson B.V."/>
            <person name="Hannenhalli S."/>
            <person name="Turner R."/>
            <person name="Yooseph S."/>
            <person name="Lu F."/>
            <person name="Nusskern D.R."/>
            <person name="Shue B.C."/>
            <person name="Zheng X.H."/>
            <person name="Zhong F."/>
            <person name="Delcher A.L."/>
            <person name="Huson D.H."/>
            <person name="Kravitz S.A."/>
            <person name="Mouchard L."/>
            <person name="Reinert K."/>
            <person name="Remington K.A."/>
            <person name="Clark A.G."/>
            <person name="Waterman M.S."/>
            <person name="Eichler E.E."/>
            <person name="Adams M.D."/>
            <person name="Hunkapiller M.W."/>
            <person name="Myers E.W."/>
            <person name="Venter J.C."/>
        </authorList>
    </citation>
    <scope>NUCLEOTIDE SEQUENCE [LARGE SCALE GENOMIC DNA]</scope>
</reference>
<reference key="10">
    <citation type="journal article" date="2004" name="Genome Res.">
        <title>The status, quality, and expansion of the NIH full-length cDNA project: the Mammalian Gene Collection (MGC).</title>
        <authorList>
            <consortium name="The MGC Project Team"/>
        </authorList>
    </citation>
    <scope>NUCLEOTIDE SEQUENCE [LARGE SCALE MRNA] (ISOFORMS 1 AND 5)</scope>
    <source>
        <tissue>Blood</tissue>
    </source>
</reference>
<reference key="11">
    <citation type="journal article" date="1997" name="Cancer Res.">
        <title>Analysis of expression of cMOAT (MRP2), MRP3, MRP4, and MRP5, homologues of the multidrug resistance-associated protein gene (MRP1), in human cancer cell lines.</title>
        <authorList>
            <person name="Kool M."/>
            <person name="de Haas M."/>
            <person name="Scheffer G.L."/>
            <person name="Scheper R.J."/>
            <person name="van Eijk M.J."/>
            <person name="Juijn J.A."/>
            <person name="Baas F."/>
            <person name="Borst P."/>
        </authorList>
    </citation>
    <scope>NUCLEOTIDE SEQUENCE [MRNA] OF 1043-1527 (ISOFORM 1)</scope>
    <source>
        <tissue>Liver</tissue>
    </source>
</reference>
<reference key="12">
    <citation type="journal article" date="2001" name="J. Biol. Chem.">
        <title>Characterization of drug transport by the human multidrug resistance protein 3 (ABCC3).</title>
        <authorList>
            <person name="Zelcer N."/>
            <person name="Saeki T."/>
            <person name="Reid G."/>
            <person name="Beijnen J.H."/>
            <person name="Borst P."/>
        </authorList>
    </citation>
    <scope>CATALYTIC ACTIVITY</scope>
    <scope>FUNCTION</scope>
    <scope>BIOPHYSICOCHEMICAL PROPERTIES</scope>
</reference>
<reference key="13">
    <citation type="journal article" date="2004" name="Pharmacogenetics">
        <title>Identification and functional characterization of the natural variant MRP3-Arg1297His of human multidrug resistance protein 3 (MRP3/ABCC3).</title>
        <authorList>
            <person name="Lee Y.M."/>
            <person name="Cui Y."/>
            <person name="Koenig J."/>
            <person name="Risch A."/>
            <person name="Jaeger B."/>
            <person name="Drings P."/>
            <person name="Bartsch H."/>
            <person name="Keppler D."/>
            <person name="Nies A.T."/>
        </authorList>
    </citation>
    <scope>FUNCTION</scope>
    <scope>CATALYTIC ACTIVITY</scope>
    <scope>VARIANTS GLN-548 AND HIS-1297</scope>
    <scope>CHARACTERIZATION OF VARIANT HIS-1297</scope>
    <scope>SUBCELLULAR LOCATION</scope>
    <scope>BIOPHYSICOCHEMICAL PROPERTIES</scope>
</reference>
<reference key="14">
    <citation type="journal article" date="2004" name="Genome Biol.">
        <title>An unappreciated role for RNA surveillance.</title>
        <authorList>
            <person name="Hillman R.T."/>
            <person name="Green R.E."/>
            <person name="Brenner S.E."/>
        </authorList>
    </citation>
    <scope>SPLICE ISOFORM(S) THAT ARE POTENTIAL NMD TARGET(S)</scope>
</reference>
<reference key="15">
    <citation type="journal article" date="2008" name="Proc. Natl. Acad. Sci. U.S.A.">
        <title>A quantitative atlas of mitotic phosphorylation.</title>
        <authorList>
            <person name="Dephoure N."/>
            <person name="Zhou C."/>
            <person name="Villen J."/>
            <person name="Beausoleil S.A."/>
            <person name="Bakalarski C.E."/>
            <person name="Elledge S.J."/>
            <person name="Gygi S.P."/>
        </authorList>
    </citation>
    <scope>IDENTIFICATION BY MASS SPECTROMETRY [LARGE SCALE ANALYSIS]</scope>
    <source>
        <tissue>Cervix carcinoma</tissue>
    </source>
</reference>
<reference key="16">
    <citation type="journal article" date="2013" name="J. Proteome Res.">
        <title>Toward a comprehensive characterization of a human cancer cell phosphoproteome.</title>
        <authorList>
            <person name="Zhou H."/>
            <person name="Di Palma S."/>
            <person name="Preisinger C."/>
            <person name="Peng M."/>
            <person name="Polat A.N."/>
            <person name="Heck A.J."/>
            <person name="Mohammed S."/>
        </authorList>
    </citation>
    <scope>PHOSPHORYLATION [LARGE SCALE ANALYSIS] AT SER-908 AND SER-911</scope>
    <scope>IDENTIFICATION BY MASS SPECTROMETRY [LARGE SCALE ANALYSIS]</scope>
    <source>
        <tissue>Cervix carcinoma</tissue>
    </source>
</reference>
<reference key="17">
    <citation type="journal article" date="2014" name="J. Proteomics">
        <title>An enzyme assisted RP-RPLC approach for in-depth analysis of human liver phosphoproteome.</title>
        <authorList>
            <person name="Bian Y."/>
            <person name="Song C."/>
            <person name="Cheng K."/>
            <person name="Dong M."/>
            <person name="Wang F."/>
            <person name="Huang J."/>
            <person name="Sun D."/>
            <person name="Wang L."/>
            <person name="Ye M."/>
            <person name="Zou H."/>
        </authorList>
    </citation>
    <scope>PHOSPHORYLATION [LARGE SCALE ANALYSIS] AT SER-908</scope>
    <scope>IDENTIFICATION BY MASS SPECTROMETRY [LARGE SCALE ANALYSIS]</scope>
    <source>
        <tissue>Liver</tissue>
    </source>
</reference>
<reference key="18">
    <citation type="journal article" date="2017" name="J. Pharm. Sci.">
        <title>The Organic Anion-Transporting Peptide 2B1 Is Localized in the Basolateral Membrane of the Human Jejunum and Caco-2 Monolayers.</title>
        <authorList>
            <person name="Keiser M."/>
            <person name="Kaltheuner L."/>
            <person name="Wildberg C."/>
            <person name="Mueller J."/>
            <person name="Grube M."/>
            <person name="Partecke L.I."/>
            <person name="Heidecke C.D."/>
            <person name="Oswald S."/>
        </authorList>
    </citation>
    <scope>SUBCELLULAR LOCATION</scope>
    <scope>TISSUE SPECIFICITY</scope>
</reference>
<reference key="19">
    <citation type="journal article" date="2022" name="Drug Metab. Dispos.">
        <title>Localization of Xenobiotic Transporters Expressed at the Human Blood-Testis Barrier.</title>
        <authorList>
            <person name="Hau R.K."/>
            <person name="Klein R.R."/>
            <person name="Wright S.H."/>
            <person name="Cherrington N.J."/>
        </authorList>
    </citation>
    <scope>FUNCTION</scope>
    <scope>SUBCELLULAR LOCATION</scope>
    <scope>TISSUE SPECIFICITY</scope>
</reference>
<evidence type="ECO:0000250" key="1"/>
<evidence type="ECO:0000250" key="2">
    <source>
        <dbReference type="UniProtKB" id="O88563"/>
    </source>
</evidence>
<evidence type="ECO:0000255" key="3"/>
<evidence type="ECO:0000255" key="4">
    <source>
        <dbReference type="PROSITE-ProRule" id="PRU00434"/>
    </source>
</evidence>
<evidence type="ECO:0000255" key="5">
    <source>
        <dbReference type="PROSITE-ProRule" id="PRU00441"/>
    </source>
</evidence>
<evidence type="ECO:0000256" key="6">
    <source>
        <dbReference type="SAM" id="MobiDB-lite"/>
    </source>
</evidence>
<evidence type="ECO:0000269" key="7">
    <source>
    </source>
</evidence>
<evidence type="ECO:0000269" key="8">
    <source>
    </source>
</evidence>
<evidence type="ECO:0000269" key="9">
    <source>
    </source>
</evidence>
<evidence type="ECO:0000269" key="10">
    <source>
    </source>
</evidence>
<evidence type="ECO:0000269" key="11">
    <source>
    </source>
</evidence>
<evidence type="ECO:0000269" key="12">
    <source>
    </source>
</evidence>
<evidence type="ECO:0000269" key="13">
    <source>
    </source>
</evidence>
<evidence type="ECO:0000269" key="14">
    <source>
    </source>
</evidence>
<evidence type="ECO:0000303" key="15">
    <source>
    </source>
</evidence>
<evidence type="ECO:0000303" key="16">
    <source>
    </source>
</evidence>
<evidence type="ECO:0000303" key="17">
    <source>
    </source>
</evidence>
<evidence type="ECO:0000303" key="18">
    <source>
    </source>
</evidence>
<evidence type="ECO:0000303" key="19">
    <source ref="7"/>
</evidence>
<evidence type="ECO:0000305" key="20"/>
<evidence type="ECO:0000305" key="21">
    <source>
    </source>
</evidence>
<evidence type="ECO:0000305" key="22">
    <source>
    </source>
</evidence>
<evidence type="ECO:0000305" key="23">
    <source>
    </source>
</evidence>
<evidence type="ECO:0000312" key="24">
    <source>
        <dbReference type="HGNC" id="HGNC:54"/>
    </source>
</evidence>
<evidence type="ECO:0007744" key="25">
    <source>
    </source>
</evidence>
<evidence type="ECO:0007744" key="26">
    <source>
    </source>
</evidence>
<evidence type="ECO:0007829" key="27">
    <source>
        <dbReference type="PDB" id="8HVH"/>
    </source>
</evidence>
<dbReference type="EC" id="7.6.2.-" evidence="9 10"/>
<dbReference type="EC" id="7.6.2.2" evidence="8 9 14"/>
<dbReference type="EC" id="7.6.2.3" evidence="9 10 14"/>
<dbReference type="EMBL" id="AF083552">
    <property type="protein sequence ID" value="AAC34668.1"/>
    <property type="molecule type" value="mRNA"/>
</dbReference>
<dbReference type="EMBL" id="AB010887">
    <property type="protein sequence ID" value="BAA28146.1"/>
    <property type="molecule type" value="mRNA"/>
</dbReference>
<dbReference type="EMBL" id="AF104943">
    <property type="protein sequence ID" value="AAD04170.1"/>
    <property type="molecule type" value="mRNA"/>
</dbReference>
<dbReference type="EMBL" id="AF085690">
    <property type="protein sequence ID" value="AAD02845.1"/>
    <property type="molecule type" value="mRNA"/>
</dbReference>
<dbReference type="EMBL" id="AF085691">
    <property type="protein sequence ID" value="AAD02846.1"/>
    <property type="molecule type" value="mRNA"/>
</dbReference>
<dbReference type="EMBL" id="AF085692">
    <property type="protein sequence ID" value="AAD02847.1"/>
    <property type="molecule type" value="mRNA"/>
</dbReference>
<dbReference type="EMBL" id="Y17151">
    <property type="protein sequence ID" value="CAA76658.2"/>
    <property type="molecule type" value="mRNA"/>
</dbReference>
<dbReference type="EMBL" id="AF009670">
    <property type="protein sequence ID" value="AAD01430.1"/>
    <property type="status" value="ALT_FRAME"/>
    <property type="molecule type" value="mRNA"/>
</dbReference>
<dbReference type="EMBL" id="AF154001">
    <property type="protein sequence ID" value="AAD38185.1"/>
    <property type="status" value="ALT_SEQ"/>
    <property type="molecule type" value="mRNA"/>
</dbReference>
<dbReference type="EMBL" id="AC004590">
    <property type="status" value="NOT_ANNOTATED_CDS"/>
    <property type="molecule type" value="Genomic_DNA"/>
</dbReference>
<dbReference type="EMBL" id="AC005921">
    <property type="status" value="NOT_ANNOTATED_CDS"/>
    <property type="molecule type" value="Genomic_DNA"/>
</dbReference>
<dbReference type="EMBL" id="CH471109">
    <property type="protein sequence ID" value="EAW94592.1"/>
    <property type="molecule type" value="Genomic_DNA"/>
</dbReference>
<dbReference type="EMBL" id="CH471109">
    <property type="protein sequence ID" value="EAW94590.1"/>
    <property type="molecule type" value="Genomic_DNA"/>
</dbReference>
<dbReference type="EMBL" id="CH471109">
    <property type="protein sequence ID" value="EAW94593.1"/>
    <property type="molecule type" value="Genomic_DNA"/>
</dbReference>
<dbReference type="EMBL" id="BC046126">
    <property type="protein sequence ID" value="AAH46126.1"/>
    <property type="molecule type" value="mRNA"/>
</dbReference>
<dbReference type="EMBL" id="BC137347">
    <property type="protein sequence ID" value="AAI37348.1"/>
    <property type="molecule type" value="mRNA"/>
</dbReference>
<dbReference type="EMBL" id="BC137348">
    <property type="protein sequence ID" value="AAI37349.1"/>
    <property type="molecule type" value="mRNA"/>
</dbReference>
<dbReference type="EMBL" id="U83659">
    <property type="protein sequence ID" value="AAB71756.1"/>
    <property type="status" value="ALT_FRAME"/>
    <property type="molecule type" value="mRNA"/>
</dbReference>
<dbReference type="CCDS" id="CCDS32681.1">
    <molecule id="O15438-1"/>
</dbReference>
<dbReference type="CCDS" id="CCDS45739.1">
    <molecule id="O15438-5"/>
</dbReference>
<dbReference type="PIR" id="JE0336">
    <property type="entry name" value="JE0336"/>
</dbReference>
<dbReference type="RefSeq" id="NP_001137542.1">
    <molecule id="O15438-5"/>
    <property type="nucleotide sequence ID" value="NM_001144070.2"/>
</dbReference>
<dbReference type="RefSeq" id="NP_003777.2">
    <molecule id="O15438-1"/>
    <property type="nucleotide sequence ID" value="NM_003786.3"/>
</dbReference>
<dbReference type="PDB" id="8HVH">
    <property type="method" value="EM"/>
    <property type="resolution" value="3.07 A"/>
    <property type="chains" value="A=1-1527"/>
</dbReference>
<dbReference type="PDB" id="8HW2">
    <property type="method" value="EM"/>
    <property type="resolution" value="3.65 A"/>
    <property type="chains" value="A=1-1527"/>
</dbReference>
<dbReference type="PDB" id="8HW4">
    <property type="method" value="EM"/>
    <property type="resolution" value="3.52 A"/>
    <property type="chains" value="A=1-1527"/>
</dbReference>
<dbReference type="PDB" id="8IZP">
    <property type="method" value="EM"/>
    <property type="resolution" value="3.31 A"/>
    <property type="chains" value="A=1-1527"/>
</dbReference>
<dbReference type="PDBsum" id="8HVH"/>
<dbReference type="PDBsum" id="8HW2"/>
<dbReference type="PDBsum" id="8HW4"/>
<dbReference type="PDBsum" id="8IZP"/>
<dbReference type="EMDB" id="EMD-35043"/>
<dbReference type="EMDB" id="EMD-35049"/>
<dbReference type="EMDB" id="EMD-35050"/>
<dbReference type="EMDB" id="EMD-35867"/>
<dbReference type="SMR" id="O15438"/>
<dbReference type="BioGRID" id="114255">
    <property type="interactions" value="34"/>
</dbReference>
<dbReference type="FunCoup" id="O15438">
    <property type="interactions" value="680"/>
</dbReference>
<dbReference type="IntAct" id="O15438">
    <property type="interactions" value="10"/>
</dbReference>
<dbReference type="MINT" id="O15438"/>
<dbReference type="STRING" id="9606.ENSP00000285238"/>
<dbReference type="BindingDB" id="O15438"/>
<dbReference type="ChEMBL" id="CHEMBL5918"/>
<dbReference type="DrugBank" id="DB15719">
    <property type="generic name" value="Belantamab mafodotin"/>
</dbReference>
<dbReference type="DrugBank" id="DB11936">
    <property type="generic name" value="Bempedoic acid"/>
</dbReference>
<dbReference type="DrugBank" id="DB02659">
    <property type="generic name" value="Cholic Acid"/>
</dbReference>
<dbReference type="DrugBank" id="DB00515">
    <property type="generic name" value="Cisplatin"/>
</dbReference>
<dbReference type="DrugBank" id="DB00286">
    <property type="generic name" value="Conjugated estrogens"/>
</dbReference>
<dbReference type="DrugBank" id="DB05928">
    <property type="generic name" value="Dovitinib"/>
</dbReference>
<dbReference type="DrugBank" id="DB00997">
    <property type="generic name" value="Doxorubicin"/>
</dbReference>
<dbReference type="DrugBank" id="DB05187">
    <property type="generic name" value="Elafibranor"/>
</dbReference>
<dbReference type="DrugBank" id="DB00773">
    <property type="generic name" value="Etoposide"/>
</dbReference>
<dbReference type="DrugBank" id="DB00973">
    <property type="generic name" value="Ezetimibe"/>
</dbReference>
<dbReference type="DrugBank" id="DB00950">
    <property type="generic name" value="Fexofenadine"/>
</dbReference>
<dbReference type="DrugBank" id="DB00544">
    <property type="generic name" value="Fluorouracil"/>
</dbReference>
<dbReference type="DrugBank" id="DB00158">
    <property type="generic name" value="Folic acid"/>
</dbReference>
<dbReference type="DrugBank" id="DB08884">
    <property type="generic name" value="Gadoxetic acid"/>
</dbReference>
<dbReference type="DrugBank" id="DB00143">
    <property type="generic name" value="Glutathione"/>
</dbReference>
<dbReference type="DrugBank" id="DB01016">
    <property type="generic name" value="Glyburide"/>
</dbReference>
<dbReference type="DrugBank" id="DB00328">
    <property type="generic name" value="Indomethacin"/>
</dbReference>
<dbReference type="DrugBank" id="DB00709">
    <property type="generic name" value="Lamivudine"/>
</dbReference>
<dbReference type="DrugBank" id="DB00563">
    <property type="generic name" value="Methotrexate"/>
</dbReference>
<dbReference type="DrugBank" id="DB01011">
    <property type="generic name" value="Metyrapone"/>
</dbReference>
<dbReference type="DrugBank" id="DB01115">
    <property type="generic name" value="Nifedipine"/>
</dbReference>
<dbReference type="DrugBank" id="DB00338">
    <property type="generic name" value="Omeprazole"/>
</dbReference>
<dbReference type="DrugBank" id="DB01174">
    <property type="generic name" value="Phenobarbital"/>
</dbReference>
<dbReference type="DrugBank" id="DB06813">
    <property type="generic name" value="Pralatrexate"/>
</dbReference>
<dbReference type="DrugBank" id="DB01032">
    <property type="generic name" value="Probenecid"/>
</dbReference>
<dbReference type="DrugBank" id="DB01069">
    <property type="generic name" value="Promethazine"/>
</dbReference>
<dbReference type="DrugBank" id="DB00481">
    <property type="generic name" value="Raloxifene"/>
</dbReference>
<dbReference type="DrugBank" id="DB01045">
    <property type="generic name" value="Rifampin"/>
</dbReference>
<dbReference type="DrugBank" id="DB01138">
    <property type="generic name" value="Sulfinpyrazone"/>
</dbReference>
<dbReference type="DrugBank" id="DB04348">
    <property type="generic name" value="Taurocholic acid"/>
</dbReference>
<dbReference type="DrugBank" id="DB00661">
    <property type="generic name" value="Verapamil"/>
</dbReference>
<dbReference type="DrugBank" id="DB00541">
    <property type="generic name" value="Vincristine"/>
</dbReference>
<dbReference type="DrugCentral" id="O15438"/>
<dbReference type="TCDB" id="3.A.1.208.9">
    <property type="family name" value="the atp-binding cassette (abc) superfamily"/>
</dbReference>
<dbReference type="GlyCosmos" id="O15438">
    <property type="glycosylation" value="3 sites, No reported glycans"/>
</dbReference>
<dbReference type="GlyGen" id="O15438">
    <property type="glycosylation" value="5 sites, 1 N-linked glycan (1 site), 1 O-linked glycan (1 site)"/>
</dbReference>
<dbReference type="iPTMnet" id="O15438"/>
<dbReference type="PhosphoSitePlus" id="O15438"/>
<dbReference type="SwissPalm" id="O15438"/>
<dbReference type="BioMuta" id="ABCC3"/>
<dbReference type="jPOST" id="O15438"/>
<dbReference type="MassIVE" id="O15438"/>
<dbReference type="PaxDb" id="9606-ENSP00000285238"/>
<dbReference type="PeptideAtlas" id="O15438"/>
<dbReference type="ProteomicsDB" id="48659">
    <molecule id="O15438-1"/>
</dbReference>
<dbReference type="ProteomicsDB" id="48660">
    <molecule id="O15438-2"/>
</dbReference>
<dbReference type="ProteomicsDB" id="48661">
    <molecule id="O15438-3"/>
</dbReference>
<dbReference type="ProteomicsDB" id="48662">
    <molecule id="O15438-4"/>
</dbReference>
<dbReference type="ProteomicsDB" id="48663">
    <molecule id="O15438-5"/>
</dbReference>
<dbReference type="Pumba" id="O15438"/>
<dbReference type="Antibodypedia" id="18128">
    <property type="antibodies" value="314 antibodies from 37 providers"/>
</dbReference>
<dbReference type="DNASU" id="8714"/>
<dbReference type="Ensembl" id="ENST00000285238.13">
    <molecule id="O15438-1"/>
    <property type="protein sequence ID" value="ENSP00000285238.8"/>
    <property type="gene ID" value="ENSG00000108846.16"/>
</dbReference>
<dbReference type="Ensembl" id="ENST00000427699.5">
    <molecule id="O15438-5"/>
    <property type="protein sequence ID" value="ENSP00000395160.1"/>
    <property type="gene ID" value="ENSG00000108846.16"/>
</dbReference>
<dbReference type="Ensembl" id="ENST00000502426.5">
    <molecule id="O15438-3"/>
    <property type="protein sequence ID" value="ENSP00000427073.1"/>
    <property type="gene ID" value="ENSG00000108846.16"/>
</dbReference>
<dbReference type="Ensembl" id="ENST00000505699.5">
    <molecule id="O15438-2"/>
    <property type="protein sequence ID" value="ENSP00000427521.1"/>
    <property type="gene ID" value="ENSG00000108846.16"/>
</dbReference>
<dbReference type="GeneID" id="8714"/>
<dbReference type="KEGG" id="hsa:8714"/>
<dbReference type="MANE-Select" id="ENST00000285238.13">
    <property type="protein sequence ID" value="ENSP00000285238.8"/>
    <property type="RefSeq nucleotide sequence ID" value="NM_003786.4"/>
    <property type="RefSeq protein sequence ID" value="NP_003777.2"/>
</dbReference>
<dbReference type="UCSC" id="uc002isk.5">
    <molecule id="O15438-1"/>
    <property type="organism name" value="human"/>
</dbReference>
<dbReference type="AGR" id="HGNC:54"/>
<dbReference type="CTD" id="8714"/>
<dbReference type="DisGeNET" id="8714"/>
<dbReference type="GeneCards" id="ABCC3"/>
<dbReference type="HGNC" id="HGNC:54">
    <property type="gene designation" value="ABCC3"/>
</dbReference>
<dbReference type="HPA" id="ENSG00000108846">
    <property type="expression patterns" value="Tissue enhanced (adrenal gland, liver)"/>
</dbReference>
<dbReference type="MalaCards" id="ABCC3"/>
<dbReference type="MIM" id="604323">
    <property type="type" value="gene"/>
</dbReference>
<dbReference type="neXtProt" id="NX_O15438"/>
<dbReference type="OpenTargets" id="ENSG00000108846"/>
<dbReference type="PharmGKB" id="PA376"/>
<dbReference type="VEuPathDB" id="HostDB:ENSG00000108846"/>
<dbReference type="eggNOG" id="KOG0054">
    <property type="taxonomic scope" value="Eukaryota"/>
</dbReference>
<dbReference type="GeneTree" id="ENSGT00940000161624"/>
<dbReference type="HOGENOM" id="CLU_000604_27_13_1"/>
<dbReference type="InParanoid" id="O15438"/>
<dbReference type="OMA" id="KTWIMAF"/>
<dbReference type="OrthoDB" id="6500128at2759"/>
<dbReference type="PAN-GO" id="O15438">
    <property type="GO annotations" value="3 GO annotations based on evolutionary models"/>
</dbReference>
<dbReference type="PhylomeDB" id="O15438"/>
<dbReference type="TreeFam" id="TF105199"/>
<dbReference type="BRENDA" id="7.6.2.3">
    <property type="organism ID" value="2681"/>
</dbReference>
<dbReference type="PathwayCommons" id="O15438"/>
<dbReference type="Reactome" id="R-HSA-159418">
    <property type="pathway name" value="Recycling of bile acids and salts"/>
</dbReference>
<dbReference type="Reactome" id="R-HSA-382556">
    <property type="pathway name" value="ABC-family proteins mediated transport"/>
</dbReference>
<dbReference type="Reactome" id="R-HSA-9749641">
    <property type="pathway name" value="Aspirin ADME"/>
</dbReference>
<dbReference type="Reactome" id="R-HSA-9753281">
    <property type="pathway name" value="Paracetamol ADME"/>
</dbReference>
<dbReference type="Reactome" id="R-HSA-9818032">
    <property type="pathway name" value="NFE2L2 regulating MDR associated enzymes"/>
</dbReference>
<dbReference type="SignaLink" id="O15438"/>
<dbReference type="SIGNOR" id="O15438"/>
<dbReference type="BioGRID-ORCS" id="8714">
    <property type="hits" value="19 hits in 1148 CRISPR screens"/>
</dbReference>
<dbReference type="ChiTaRS" id="ABCC3">
    <property type="organism name" value="human"/>
</dbReference>
<dbReference type="GeneWiki" id="ABCC3"/>
<dbReference type="GenomeRNAi" id="8714"/>
<dbReference type="Pharos" id="O15438">
    <property type="development level" value="Tbio"/>
</dbReference>
<dbReference type="PRO" id="PR:O15438"/>
<dbReference type="Proteomes" id="UP000005640">
    <property type="component" value="Chromosome 17"/>
</dbReference>
<dbReference type="RNAct" id="O15438">
    <property type="molecule type" value="protein"/>
</dbReference>
<dbReference type="Bgee" id="ENSG00000108846">
    <property type="expression patterns" value="Expressed in pancreatic ductal cell and 148 other cell types or tissues"/>
</dbReference>
<dbReference type="ExpressionAtlas" id="O15438">
    <property type="expression patterns" value="baseline and differential"/>
</dbReference>
<dbReference type="GO" id="GO:0009925">
    <property type="term" value="C:basal plasma membrane"/>
    <property type="evidence" value="ECO:0000314"/>
    <property type="project" value="UniProtKB"/>
</dbReference>
<dbReference type="GO" id="GO:0016323">
    <property type="term" value="C:basolateral plasma membrane"/>
    <property type="evidence" value="ECO:0000314"/>
    <property type="project" value="UniProtKB"/>
</dbReference>
<dbReference type="GO" id="GO:0036064">
    <property type="term" value="C:ciliary basal body"/>
    <property type="evidence" value="ECO:0000314"/>
    <property type="project" value="HPA"/>
</dbReference>
<dbReference type="GO" id="GO:0016020">
    <property type="term" value="C:membrane"/>
    <property type="evidence" value="ECO:0000318"/>
    <property type="project" value="GO_Central"/>
</dbReference>
<dbReference type="GO" id="GO:0005886">
    <property type="term" value="C:plasma membrane"/>
    <property type="evidence" value="ECO:0000314"/>
    <property type="project" value="ARUK-UCL"/>
</dbReference>
<dbReference type="GO" id="GO:0015432">
    <property type="term" value="F:ABC-type bile acid transporter activity"/>
    <property type="evidence" value="ECO:0000250"/>
    <property type="project" value="UniProtKB"/>
</dbReference>
<dbReference type="GO" id="GO:0015431">
    <property type="term" value="F:ABC-type glutathione S-conjugate transporter activity"/>
    <property type="evidence" value="ECO:0000314"/>
    <property type="project" value="UniProtKB"/>
</dbReference>
<dbReference type="GO" id="GO:0140359">
    <property type="term" value="F:ABC-type transporter activity"/>
    <property type="evidence" value="ECO:0000304"/>
    <property type="project" value="Reactome"/>
</dbReference>
<dbReference type="GO" id="GO:0008559">
    <property type="term" value="F:ABC-type xenobiotic transporter activity"/>
    <property type="evidence" value="ECO:0000314"/>
    <property type="project" value="UniProtKB"/>
</dbReference>
<dbReference type="GO" id="GO:0005524">
    <property type="term" value="F:ATP binding"/>
    <property type="evidence" value="ECO:0007669"/>
    <property type="project" value="UniProtKB-KW"/>
</dbReference>
<dbReference type="GO" id="GO:0016887">
    <property type="term" value="F:ATP hydrolysis activity"/>
    <property type="evidence" value="ECO:0007669"/>
    <property type="project" value="InterPro"/>
</dbReference>
<dbReference type="GO" id="GO:0043225">
    <property type="term" value="F:ATPase-coupled inorganic anion transmembrane transporter activity"/>
    <property type="evidence" value="ECO:0000304"/>
    <property type="project" value="Reactome"/>
</dbReference>
<dbReference type="GO" id="GO:0042626">
    <property type="term" value="F:ATPase-coupled transmembrane transporter activity"/>
    <property type="evidence" value="ECO:0000314"/>
    <property type="project" value="ARUK-UCL"/>
</dbReference>
<dbReference type="GO" id="GO:0015164">
    <property type="term" value="F:glucuronoside transmembrane transporter activity"/>
    <property type="evidence" value="ECO:0000314"/>
    <property type="project" value="ARUK-UCL"/>
</dbReference>
<dbReference type="GO" id="GO:0071714">
    <property type="term" value="F:icosanoid transmembrane transporter activity"/>
    <property type="evidence" value="ECO:0000314"/>
    <property type="project" value="ARUK-UCL"/>
</dbReference>
<dbReference type="GO" id="GO:0042910">
    <property type="term" value="F:xenobiotic transmembrane transporter activity"/>
    <property type="evidence" value="ECO:0000314"/>
    <property type="project" value="ARUK-UCL"/>
</dbReference>
<dbReference type="GO" id="GO:0015721">
    <property type="term" value="P:bile acid and bile salt transport"/>
    <property type="evidence" value="ECO:0000250"/>
    <property type="project" value="UniProtKB"/>
</dbReference>
<dbReference type="GO" id="GO:0071716">
    <property type="term" value="P:leukotriene transport"/>
    <property type="evidence" value="ECO:0000315"/>
    <property type="project" value="UniProtKB"/>
</dbReference>
<dbReference type="GO" id="GO:0055085">
    <property type="term" value="P:transmembrane transport"/>
    <property type="evidence" value="ECO:0000318"/>
    <property type="project" value="GO_Central"/>
</dbReference>
<dbReference type="GO" id="GO:0150104">
    <property type="term" value="P:transport across blood-brain barrier"/>
    <property type="evidence" value="ECO:0000303"/>
    <property type="project" value="ARUK-UCL"/>
</dbReference>
<dbReference type="GO" id="GO:0006805">
    <property type="term" value="P:xenobiotic metabolic process"/>
    <property type="evidence" value="ECO:0000304"/>
    <property type="project" value="Reactome"/>
</dbReference>
<dbReference type="GO" id="GO:0006855">
    <property type="term" value="P:xenobiotic transmembrane transport"/>
    <property type="evidence" value="ECO:0000315"/>
    <property type="project" value="UniProtKB"/>
</dbReference>
<dbReference type="GO" id="GO:0042908">
    <property type="term" value="P:xenobiotic transport"/>
    <property type="evidence" value="ECO:0000314"/>
    <property type="project" value="ARUK-UCL"/>
</dbReference>
<dbReference type="CDD" id="cd18595">
    <property type="entry name" value="ABC_6TM_MRP1_2_3_6_D1_like"/>
    <property type="match status" value="1"/>
</dbReference>
<dbReference type="CDD" id="cd18603">
    <property type="entry name" value="ABC_6TM_MRP1_2_3_6_D2_like"/>
    <property type="match status" value="1"/>
</dbReference>
<dbReference type="CDD" id="cd03250">
    <property type="entry name" value="ABCC_MRP_domain1"/>
    <property type="match status" value="1"/>
</dbReference>
<dbReference type="CDD" id="cd03244">
    <property type="entry name" value="ABCC_MRP_domain2"/>
    <property type="match status" value="1"/>
</dbReference>
<dbReference type="FunFam" id="3.40.50.300:FF:000293">
    <property type="entry name" value="ATP binding cassette subfamily C member 1"/>
    <property type="match status" value="1"/>
</dbReference>
<dbReference type="FunFam" id="1.20.1560.10:FF:000001">
    <property type="entry name" value="ATP-binding cassette subfamily C member 1"/>
    <property type="match status" value="1"/>
</dbReference>
<dbReference type="FunFam" id="1.20.1560.10:FF:000007">
    <property type="entry name" value="ATP-binding cassette subfamily C member 1"/>
    <property type="match status" value="1"/>
</dbReference>
<dbReference type="FunFam" id="3.40.50.300:FF:000074">
    <property type="entry name" value="Multidrug resistance-associated protein 5 isoform 1"/>
    <property type="match status" value="1"/>
</dbReference>
<dbReference type="Gene3D" id="1.20.1560.10">
    <property type="entry name" value="ABC transporter type 1, transmembrane domain"/>
    <property type="match status" value="2"/>
</dbReference>
<dbReference type="Gene3D" id="3.40.50.300">
    <property type="entry name" value="P-loop containing nucleotide triphosphate hydrolases"/>
    <property type="match status" value="2"/>
</dbReference>
<dbReference type="InterPro" id="IPR003593">
    <property type="entry name" value="AAA+_ATPase"/>
</dbReference>
<dbReference type="InterPro" id="IPR011527">
    <property type="entry name" value="ABC1_TM_dom"/>
</dbReference>
<dbReference type="InterPro" id="IPR036640">
    <property type="entry name" value="ABC1_TM_sf"/>
</dbReference>
<dbReference type="InterPro" id="IPR003439">
    <property type="entry name" value="ABC_transporter-like_ATP-bd"/>
</dbReference>
<dbReference type="InterPro" id="IPR017871">
    <property type="entry name" value="ABC_transporter-like_CS"/>
</dbReference>
<dbReference type="InterPro" id="IPR050173">
    <property type="entry name" value="ABC_transporter_C-like"/>
</dbReference>
<dbReference type="InterPro" id="IPR005292">
    <property type="entry name" value="MRP"/>
</dbReference>
<dbReference type="InterPro" id="IPR027417">
    <property type="entry name" value="P-loop_NTPase"/>
</dbReference>
<dbReference type="InterPro" id="IPR056227">
    <property type="entry name" value="TMD0_ABC"/>
</dbReference>
<dbReference type="NCBIfam" id="TIGR00957">
    <property type="entry name" value="MRP_assoc_pro"/>
    <property type="match status" value="1"/>
</dbReference>
<dbReference type="PANTHER" id="PTHR24223">
    <property type="entry name" value="ATP-BINDING CASSETTE SUB-FAMILY C"/>
    <property type="match status" value="1"/>
</dbReference>
<dbReference type="PANTHER" id="PTHR24223:SF405">
    <property type="entry name" value="ATP-BINDING CASSETTE SUB-FAMILY C MEMBER 3"/>
    <property type="match status" value="1"/>
</dbReference>
<dbReference type="Pfam" id="PF00664">
    <property type="entry name" value="ABC_membrane"/>
    <property type="match status" value="2"/>
</dbReference>
<dbReference type="Pfam" id="PF00005">
    <property type="entry name" value="ABC_tran"/>
    <property type="match status" value="2"/>
</dbReference>
<dbReference type="Pfam" id="PF24357">
    <property type="entry name" value="TMD0_ABC"/>
    <property type="match status" value="1"/>
</dbReference>
<dbReference type="SMART" id="SM00382">
    <property type="entry name" value="AAA"/>
    <property type="match status" value="2"/>
</dbReference>
<dbReference type="SUPFAM" id="SSF90123">
    <property type="entry name" value="ABC transporter transmembrane region"/>
    <property type="match status" value="2"/>
</dbReference>
<dbReference type="SUPFAM" id="SSF52540">
    <property type="entry name" value="P-loop containing nucleoside triphosphate hydrolases"/>
    <property type="match status" value="2"/>
</dbReference>
<dbReference type="PROSITE" id="PS50929">
    <property type="entry name" value="ABC_TM1F"/>
    <property type="match status" value="2"/>
</dbReference>
<dbReference type="PROSITE" id="PS00211">
    <property type="entry name" value="ABC_TRANSPORTER_1"/>
    <property type="match status" value="2"/>
</dbReference>
<dbReference type="PROSITE" id="PS50893">
    <property type="entry name" value="ABC_TRANSPORTER_2"/>
    <property type="match status" value="2"/>
</dbReference>
<sequence length="1527" mass="169343">MDALCGSGELGSKFWDSNLSVHTENPDLTPCFQNSLLAWVPCIYLWVALPCYLLYLRHHCRGYIILSHLSKLKMVLGVLLWCVSWADLFYSFHGLVHGRAPAPVFFVTPLVVGVTMLLATLLIQYERLQGVQSSGVLIIFWFLCVVCAIVPFRSKILLAKAEGEISDPFRFTTFYIHFALVLSALILACFREKPPFFSAKNVDPNPYPETSAGFLSRLFFWWFTKMAIYGYRHPLEEKDLWSLKEEDRSQMVVQQLLEAWRKQEKQTARHKASAAPGKNASGEDEVLLGARPRPRKPSFLKALLATFGSSFLISACFKLIQDLLSFINPQLLSILIRFISNPMAPSWWGFLVAGLMFLCSMMQSLILQHYYHYIFVTGVKFRTGIMGVIYRKALVITNSVKRASTVGEIVNLMSVDAQRFMDLAPFLNLLWSAPLQIILAIYFLWQNLGPSVLAGVAFMVLLIPLNGAVAVKMRAFQVKQMKLKDSRIKLMSEILNGIKVLKLYAWEPSFLKQVEGIRQGELQLLRTAAYLHTTTTFTWMCSPFLVTLITLWVYVYVDPNNVLDAEKAFVSVSLFNILRLPLNMLPQLISNLTQASVSLKRIQQFLSQEELDPQSVERKTISPGYAITIHSGTFTWAQDLPPTLHSLDIQVPKGALVAVVGPVGCGKSSLVSALLGEMEKLEGKVHMKGSVAYVPQQAWIQNCTLQENVLFGKALNPKRYQQTLEACALLADLEMLPGGDQTEIGEKGINLSGGQRQRVSLARAVYSDADIFLLDDPLSAVDSHVAKHIFDHVIGPEGVLAGKTRVLVTHGISFLPQTDFIIVLADGQVSEMGPYPALLQRNGSFANFLCNYAPDEDQGHLEDSWTALEGAEDKEALLIEDTLSNHTDLTDNDPVTYVVQKQFMRQLSALSSDGEGQGRPVPRRHLGPSEKVQVTEAKADGALTQEEKAAIGTVELSVFWDYAKAVGLCTTLAICLLYVGQSAAAIGANVWLSAWTNDAMADSRQNNTSLRLGVYAALGILQGFLVMLAAMAMAAGGIQAARVLHQALLHNKIRSPQSFFDTTPSGRILNCFSKDIYVVDEVLAPVILMLLNSFFNAISTLVVIMASTPLFTVVILPLAVLYTLVQRFYAATSRQLKRLESVSRSPIYSHFSETVTGASVIRAYNRSRDFEIISDTKVDANQRSCYPYIISNRWLSIGVEFVGNCVVLFAALFAVIGRSSLNPGLVGLSVSYSLQVTFALNWMIRMMSDLESNIVAVERVKEYSKTETEAPWVVEGSRPPEGWPPRGEVEFRNYSVRYRPGLDLVLRDLSLHVHGGEKVGIVGRTGAGKSSMTLCLFRILEAAKGEIRIDGLNVADIGLHDLRSQLTIIPQDPILFSGTLRMNLDPFGSYSEEDIWWALELSHLHTFVSSQPAGLDFQCSEGGENLSVGQRQLVCLARALLRKSRILVLDEATAAIDLETDNLIQATIRTQFDTCTVLTIAHRLNTIMDYTRVLVLDKGVVAEFDSPANLIAARGIFYGMARDAGLA</sequence>
<gene>
    <name evidence="24" type="primary">ABCC3</name>
    <name type="synonym">CMOAT2</name>
    <name type="synonym">MLP2</name>
    <name type="synonym">MRP3</name>
</gene>
<name>MRP3_HUMAN</name>